<name>ARGC_SYNY3</name>
<organism>
    <name type="scientific">Synechocystis sp. (strain ATCC 27184 / PCC 6803 / Kazusa)</name>
    <dbReference type="NCBI Taxonomy" id="1111708"/>
    <lineage>
        <taxon>Bacteria</taxon>
        <taxon>Bacillati</taxon>
        <taxon>Cyanobacteriota</taxon>
        <taxon>Cyanophyceae</taxon>
        <taxon>Synechococcales</taxon>
        <taxon>Merismopediaceae</taxon>
        <taxon>Synechocystis</taxon>
    </lineage>
</organism>
<accession>P54899</accession>
<feature type="chain" id="PRO_0000112465" description="N-acetyl-gamma-glutamyl-phosphate reductase">
    <location>
        <begin position="1"/>
        <end position="351"/>
    </location>
</feature>
<feature type="active site" evidence="1">
    <location>
        <position position="154"/>
    </location>
</feature>
<protein>
    <recommendedName>
        <fullName evidence="1">N-acetyl-gamma-glutamyl-phosphate reductase</fullName>
        <shortName evidence="1">AGPR</shortName>
        <ecNumber evidence="1">1.2.1.38</ecNumber>
    </recommendedName>
    <alternativeName>
        <fullName evidence="1">N-acetyl-glutamate semialdehyde dehydrogenase</fullName>
        <shortName evidence="1">NAGSA dehydrogenase</shortName>
    </alternativeName>
</protein>
<sequence>MGNEKARVGIIGASGYGGIQLVRLLLEHPQVELTYLAGHSSAGKPYSDLYPHLTHRVNLTIEPIDLEAIASRCDAVFLGLPNGLACDMAPALLAKGCKVLDLSADYRFRNLNTYTEWYKKDRQDQATNNQAVYGLPELYRDAIRDAQLIGCPGCYPTASLLALSPLLKQGFIVPETAIIDAKSGTSGGGREAKVNMLLAEAEGSLGAYGVAKHRHTPEIEQIASDLAGTELRVQFTPHLIPMVRGILATVYATLRDPGLVRDDLITIYSAFYRASPFVKILPHGVYPQTKWAWGTNLCYIGIEVDPRTGRVIVLSAIDNLVKGQAGQAVQCLNLMMGWEESLGLPQLAFYP</sequence>
<keyword id="KW-0028">Amino-acid biosynthesis</keyword>
<keyword id="KW-0055">Arginine biosynthesis</keyword>
<keyword id="KW-0963">Cytoplasm</keyword>
<keyword id="KW-0521">NADP</keyword>
<keyword id="KW-0560">Oxidoreductase</keyword>
<keyword id="KW-1185">Reference proteome</keyword>
<proteinExistence type="inferred from homology"/>
<evidence type="ECO:0000255" key="1">
    <source>
        <dbReference type="HAMAP-Rule" id="MF_00150"/>
    </source>
</evidence>
<dbReference type="EC" id="1.2.1.38" evidence="1"/>
<dbReference type="EMBL" id="BA000022">
    <property type="protein sequence ID" value="BAA10557.1"/>
    <property type="molecule type" value="Genomic_DNA"/>
</dbReference>
<dbReference type="PIR" id="S76613">
    <property type="entry name" value="S76613"/>
</dbReference>
<dbReference type="SMR" id="P54899"/>
<dbReference type="FunCoup" id="P54899">
    <property type="interactions" value="359"/>
</dbReference>
<dbReference type="IntAct" id="P54899">
    <property type="interactions" value="3"/>
</dbReference>
<dbReference type="STRING" id="1148.gene:10500061"/>
<dbReference type="PaxDb" id="1148-1001720"/>
<dbReference type="EnsemblBacteria" id="BAA10557">
    <property type="protein sequence ID" value="BAA10557"/>
    <property type="gene ID" value="BAA10557"/>
</dbReference>
<dbReference type="KEGG" id="syn:sll0080"/>
<dbReference type="eggNOG" id="COG0002">
    <property type="taxonomic scope" value="Bacteria"/>
</dbReference>
<dbReference type="InParanoid" id="P54899"/>
<dbReference type="PhylomeDB" id="P54899"/>
<dbReference type="UniPathway" id="UPA00068">
    <property type="reaction ID" value="UER00108"/>
</dbReference>
<dbReference type="Proteomes" id="UP000001425">
    <property type="component" value="Chromosome"/>
</dbReference>
<dbReference type="GO" id="GO:0005737">
    <property type="term" value="C:cytoplasm"/>
    <property type="evidence" value="ECO:0007669"/>
    <property type="project" value="UniProtKB-SubCell"/>
</dbReference>
<dbReference type="GO" id="GO:0003942">
    <property type="term" value="F:N-acetyl-gamma-glutamyl-phosphate reductase activity"/>
    <property type="evidence" value="ECO:0007669"/>
    <property type="project" value="UniProtKB-UniRule"/>
</dbReference>
<dbReference type="GO" id="GO:0051287">
    <property type="term" value="F:NAD binding"/>
    <property type="evidence" value="ECO:0007669"/>
    <property type="project" value="InterPro"/>
</dbReference>
<dbReference type="GO" id="GO:0070401">
    <property type="term" value="F:NADP+ binding"/>
    <property type="evidence" value="ECO:0007669"/>
    <property type="project" value="InterPro"/>
</dbReference>
<dbReference type="GO" id="GO:0006526">
    <property type="term" value="P:L-arginine biosynthetic process"/>
    <property type="evidence" value="ECO:0007669"/>
    <property type="project" value="UniProtKB-UniRule"/>
</dbReference>
<dbReference type="CDD" id="cd23934">
    <property type="entry name" value="AGPR_1_C"/>
    <property type="match status" value="1"/>
</dbReference>
<dbReference type="CDD" id="cd17895">
    <property type="entry name" value="AGPR_1_N"/>
    <property type="match status" value="1"/>
</dbReference>
<dbReference type="FunFam" id="3.30.360.10:FF:000014">
    <property type="entry name" value="N-acetyl-gamma-glutamyl-phosphate reductase"/>
    <property type="match status" value="1"/>
</dbReference>
<dbReference type="Gene3D" id="3.30.360.10">
    <property type="entry name" value="Dihydrodipicolinate Reductase, domain 2"/>
    <property type="match status" value="1"/>
</dbReference>
<dbReference type="Gene3D" id="3.40.50.720">
    <property type="entry name" value="NAD(P)-binding Rossmann-like Domain"/>
    <property type="match status" value="1"/>
</dbReference>
<dbReference type="HAMAP" id="MF_00150">
    <property type="entry name" value="ArgC_type1"/>
    <property type="match status" value="1"/>
</dbReference>
<dbReference type="InterPro" id="IPR023013">
    <property type="entry name" value="AGPR_AS"/>
</dbReference>
<dbReference type="InterPro" id="IPR000706">
    <property type="entry name" value="AGPR_type-1"/>
</dbReference>
<dbReference type="InterPro" id="IPR036291">
    <property type="entry name" value="NAD(P)-bd_dom_sf"/>
</dbReference>
<dbReference type="InterPro" id="IPR050085">
    <property type="entry name" value="NAGSA_dehydrogenase"/>
</dbReference>
<dbReference type="InterPro" id="IPR000534">
    <property type="entry name" value="Semialdehyde_DH_NAD-bd"/>
</dbReference>
<dbReference type="NCBIfam" id="TIGR01850">
    <property type="entry name" value="argC"/>
    <property type="match status" value="1"/>
</dbReference>
<dbReference type="PANTHER" id="PTHR32338:SF10">
    <property type="entry name" value="N-ACETYL-GAMMA-GLUTAMYL-PHOSPHATE REDUCTASE, CHLOROPLASTIC-RELATED"/>
    <property type="match status" value="1"/>
</dbReference>
<dbReference type="PANTHER" id="PTHR32338">
    <property type="entry name" value="N-ACETYL-GAMMA-GLUTAMYL-PHOSPHATE REDUCTASE, CHLOROPLASTIC-RELATED-RELATED"/>
    <property type="match status" value="1"/>
</dbReference>
<dbReference type="Pfam" id="PF01118">
    <property type="entry name" value="Semialdhyde_dh"/>
    <property type="match status" value="1"/>
</dbReference>
<dbReference type="Pfam" id="PF22698">
    <property type="entry name" value="Semialdhyde_dhC_1"/>
    <property type="match status" value="1"/>
</dbReference>
<dbReference type="SMART" id="SM00859">
    <property type="entry name" value="Semialdhyde_dh"/>
    <property type="match status" value="1"/>
</dbReference>
<dbReference type="SUPFAM" id="SSF55347">
    <property type="entry name" value="Glyceraldehyde-3-phosphate dehydrogenase-like, C-terminal domain"/>
    <property type="match status" value="1"/>
</dbReference>
<dbReference type="SUPFAM" id="SSF51735">
    <property type="entry name" value="NAD(P)-binding Rossmann-fold domains"/>
    <property type="match status" value="1"/>
</dbReference>
<dbReference type="PROSITE" id="PS01224">
    <property type="entry name" value="ARGC"/>
    <property type="match status" value="1"/>
</dbReference>
<gene>
    <name evidence="1" type="primary">argC</name>
    <name type="ordered locus">sll0080</name>
</gene>
<reference key="1">
    <citation type="journal article" date="1995" name="DNA Res.">
        <title>Sequence analysis of the genome of the unicellular cyanobacterium Synechocystis sp. strain PCC6803. I. Sequence features in the 1 Mb region from map positions 64% to 92% of the genome.</title>
        <authorList>
            <person name="Kaneko T."/>
            <person name="Tanaka A."/>
            <person name="Sato S."/>
            <person name="Kotani H."/>
            <person name="Sazuka T."/>
            <person name="Miyajima N."/>
            <person name="Sugiura M."/>
            <person name="Tabata S."/>
        </authorList>
    </citation>
    <scope>NUCLEOTIDE SEQUENCE [LARGE SCALE GENOMIC DNA]</scope>
    <source>
        <strain>ATCC 27184 / PCC 6803 / N-1</strain>
    </source>
</reference>
<reference key="2">
    <citation type="journal article" date="1996" name="DNA Res.">
        <title>Sequence analysis of the genome of the unicellular cyanobacterium Synechocystis sp. strain PCC6803. II. Sequence determination of the entire genome and assignment of potential protein-coding regions.</title>
        <authorList>
            <person name="Kaneko T."/>
            <person name="Sato S."/>
            <person name="Kotani H."/>
            <person name="Tanaka A."/>
            <person name="Asamizu E."/>
            <person name="Nakamura Y."/>
            <person name="Miyajima N."/>
            <person name="Hirosawa M."/>
            <person name="Sugiura M."/>
            <person name="Sasamoto S."/>
            <person name="Kimura T."/>
            <person name="Hosouchi T."/>
            <person name="Matsuno A."/>
            <person name="Muraki A."/>
            <person name="Nakazaki N."/>
            <person name="Naruo K."/>
            <person name="Okumura S."/>
            <person name="Shimpo S."/>
            <person name="Takeuchi C."/>
            <person name="Wada T."/>
            <person name="Watanabe A."/>
            <person name="Yamada M."/>
            <person name="Yasuda M."/>
            <person name="Tabata S."/>
        </authorList>
    </citation>
    <scope>NUCLEOTIDE SEQUENCE [LARGE SCALE GENOMIC DNA]</scope>
    <source>
        <strain>ATCC 27184 / PCC 6803 / Kazusa</strain>
    </source>
</reference>
<comment type="function">
    <text evidence="1">Catalyzes the NADPH-dependent reduction of N-acetyl-5-glutamyl phosphate to yield N-acetyl-L-glutamate 5-semialdehyde.</text>
</comment>
<comment type="catalytic activity">
    <reaction evidence="1">
        <text>N-acetyl-L-glutamate 5-semialdehyde + phosphate + NADP(+) = N-acetyl-L-glutamyl 5-phosphate + NADPH + H(+)</text>
        <dbReference type="Rhea" id="RHEA:21588"/>
        <dbReference type="ChEBI" id="CHEBI:15378"/>
        <dbReference type="ChEBI" id="CHEBI:29123"/>
        <dbReference type="ChEBI" id="CHEBI:43474"/>
        <dbReference type="ChEBI" id="CHEBI:57783"/>
        <dbReference type="ChEBI" id="CHEBI:57936"/>
        <dbReference type="ChEBI" id="CHEBI:58349"/>
        <dbReference type="EC" id="1.2.1.38"/>
    </reaction>
</comment>
<comment type="pathway">
    <text evidence="1">Amino-acid biosynthesis; L-arginine biosynthesis; N(2)-acetyl-L-ornithine from L-glutamate: step 3/4.</text>
</comment>
<comment type="subcellular location">
    <subcellularLocation>
        <location evidence="1">Cytoplasm</location>
    </subcellularLocation>
</comment>
<comment type="similarity">
    <text evidence="1">Belongs to the NAGSA dehydrogenase family. Type 1 subfamily.</text>
</comment>